<protein>
    <recommendedName>
        <fullName evidence="1">UPF0291 protein CPF_1260</fullName>
    </recommendedName>
</protein>
<proteinExistence type="inferred from homology"/>
<name>Y1260_CLOP1</name>
<organism>
    <name type="scientific">Clostridium perfringens (strain ATCC 13124 / DSM 756 / JCM 1290 / NCIMB 6125 / NCTC 8237 / Type A)</name>
    <dbReference type="NCBI Taxonomy" id="195103"/>
    <lineage>
        <taxon>Bacteria</taxon>
        <taxon>Bacillati</taxon>
        <taxon>Bacillota</taxon>
        <taxon>Clostridia</taxon>
        <taxon>Eubacteriales</taxon>
        <taxon>Clostridiaceae</taxon>
        <taxon>Clostridium</taxon>
    </lineage>
</organism>
<reference key="1">
    <citation type="journal article" date="2006" name="Genome Res.">
        <title>Skewed genomic variability in strains of the toxigenic bacterial pathogen, Clostridium perfringens.</title>
        <authorList>
            <person name="Myers G.S.A."/>
            <person name="Rasko D.A."/>
            <person name="Cheung J.K."/>
            <person name="Ravel J."/>
            <person name="Seshadri R."/>
            <person name="DeBoy R.T."/>
            <person name="Ren Q."/>
            <person name="Varga J."/>
            <person name="Awad M.M."/>
            <person name="Brinkac L.M."/>
            <person name="Daugherty S.C."/>
            <person name="Haft D.H."/>
            <person name="Dodson R.J."/>
            <person name="Madupu R."/>
            <person name="Nelson W.C."/>
            <person name="Rosovitz M.J."/>
            <person name="Sullivan S.A."/>
            <person name="Khouri H."/>
            <person name="Dimitrov G.I."/>
            <person name="Watkins K.L."/>
            <person name="Mulligan S."/>
            <person name="Benton J."/>
            <person name="Radune D."/>
            <person name="Fisher D.J."/>
            <person name="Atkins H.S."/>
            <person name="Hiscox T."/>
            <person name="Jost B.H."/>
            <person name="Billington S.J."/>
            <person name="Songer J.G."/>
            <person name="McClane B.A."/>
            <person name="Titball R.W."/>
            <person name="Rood J.I."/>
            <person name="Melville S.B."/>
            <person name="Paulsen I.T."/>
        </authorList>
    </citation>
    <scope>NUCLEOTIDE SEQUENCE [LARGE SCALE GENOMIC DNA]</scope>
    <source>
        <strain>ATCC 13124 / DSM 756 / JCM 1290 / NCIMB 6125 / NCTC 8237 / S 107 / Type A</strain>
    </source>
</reference>
<feature type="chain" id="PRO_1000065024" description="UPF0291 protein CPF_1260">
    <location>
        <begin position="1"/>
        <end position="59"/>
    </location>
</feature>
<feature type="region of interest" description="Disordered" evidence="2">
    <location>
        <begin position="1"/>
        <end position="30"/>
    </location>
</feature>
<keyword id="KW-0963">Cytoplasm</keyword>
<sequence length="59" mass="7272">MNIDELTKRINELHKKHKEEGLSEDEHKEREELRKEYINRFKSNLREQLKGIEPKNKKN</sequence>
<accession>Q0TRN4</accession>
<gene>
    <name type="ordered locus">CPF_1260</name>
</gene>
<evidence type="ECO:0000255" key="1">
    <source>
        <dbReference type="HAMAP-Rule" id="MF_01103"/>
    </source>
</evidence>
<evidence type="ECO:0000256" key="2">
    <source>
        <dbReference type="SAM" id="MobiDB-lite"/>
    </source>
</evidence>
<comment type="subcellular location">
    <subcellularLocation>
        <location evidence="1">Cytoplasm</location>
    </subcellularLocation>
</comment>
<comment type="similarity">
    <text evidence="1">Belongs to the UPF0291 family.</text>
</comment>
<dbReference type="EMBL" id="CP000246">
    <property type="protein sequence ID" value="ABG84538.1"/>
    <property type="molecule type" value="Genomic_DNA"/>
</dbReference>
<dbReference type="RefSeq" id="WP_003448677.1">
    <property type="nucleotide sequence ID" value="NC_008261.1"/>
</dbReference>
<dbReference type="SMR" id="Q0TRN4"/>
<dbReference type="STRING" id="195103.CPF_1260"/>
<dbReference type="PaxDb" id="195103-CPF_1260"/>
<dbReference type="KEGG" id="cpf:CPF_1260"/>
<dbReference type="eggNOG" id="COG4224">
    <property type="taxonomic scope" value="Bacteria"/>
</dbReference>
<dbReference type="HOGENOM" id="CLU_173137_3_2_9"/>
<dbReference type="Proteomes" id="UP000001823">
    <property type="component" value="Chromosome"/>
</dbReference>
<dbReference type="GO" id="GO:0005737">
    <property type="term" value="C:cytoplasm"/>
    <property type="evidence" value="ECO:0007669"/>
    <property type="project" value="UniProtKB-SubCell"/>
</dbReference>
<dbReference type="Gene3D" id="1.10.287.540">
    <property type="entry name" value="Helix hairpin bin"/>
    <property type="match status" value="1"/>
</dbReference>
<dbReference type="HAMAP" id="MF_01103">
    <property type="entry name" value="UPF0291"/>
    <property type="match status" value="1"/>
</dbReference>
<dbReference type="InterPro" id="IPR009242">
    <property type="entry name" value="DUF896"/>
</dbReference>
<dbReference type="PANTHER" id="PTHR37300">
    <property type="entry name" value="UPF0291 PROTEIN CBO2609/CLC_2481"/>
    <property type="match status" value="1"/>
</dbReference>
<dbReference type="PANTHER" id="PTHR37300:SF1">
    <property type="entry name" value="UPF0291 PROTEIN YNZC"/>
    <property type="match status" value="1"/>
</dbReference>
<dbReference type="Pfam" id="PF05979">
    <property type="entry name" value="DUF896"/>
    <property type="match status" value="1"/>
</dbReference>
<dbReference type="SUPFAM" id="SSF158221">
    <property type="entry name" value="YnzC-like"/>
    <property type="match status" value="1"/>
</dbReference>